<reference key="1">
    <citation type="journal article" date="2003" name="Nat. Genet.">
        <title>Comparative analysis of the genome sequences of Bordetella pertussis, Bordetella parapertussis and Bordetella bronchiseptica.</title>
        <authorList>
            <person name="Parkhill J."/>
            <person name="Sebaihia M."/>
            <person name="Preston A."/>
            <person name="Murphy L.D."/>
            <person name="Thomson N.R."/>
            <person name="Harris D.E."/>
            <person name="Holden M.T.G."/>
            <person name="Churcher C.M."/>
            <person name="Bentley S.D."/>
            <person name="Mungall K.L."/>
            <person name="Cerdeno-Tarraga A.-M."/>
            <person name="Temple L."/>
            <person name="James K.D."/>
            <person name="Harris B."/>
            <person name="Quail M.A."/>
            <person name="Achtman M."/>
            <person name="Atkin R."/>
            <person name="Baker S."/>
            <person name="Basham D."/>
            <person name="Bason N."/>
            <person name="Cherevach I."/>
            <person name="Chillingworth T."/>
            <person name="Collins M."/>
            <person name="Cronin A."/>
            <person name="Davis P."/>
            <person name="Doggett J."/>
            <person name="Feltwell T."/>
            <person name="Goble A."/>
            <person name="Hamlin N."/>
            <person name="Hauser H."/>
            <person name="Holroyd S."/>
            <person name="Jagels K."/>
            <person name="Leather S."/>
            <person name="Moule S."/>
            <person name="Norberczak H."/>
            <person name="O'Neil S."/>
            <person name="Ormond D."/>
            <person name="Price C."/>
            <person name="Rabbinowitsch E."/>
            <person name="Rutter S."/>
            <person name="Sanders M."/>
            <person name="Saunders D."/>
            <person name="Seeger K."/>
            <person name="Sharp S."/>
            <person name="Simmonds M."/>
            <person name="Skelton J."/>
            <person name="Squares R."/>
            <person name="Squares S."/>
            <person name="Stevens K."/>
            <person name="Unwin L."/>
            <person name="Whitehead S."/>
            <person name="Barrell B.G."/>
            <person name="Maskell D.J."/>
        </authorList>
    </citation>
    <scope>NUCLEOTIDE SEQUENCE [LARGE SCALE GENOMIC DNA]</scope>
    <source>
        <strain>Tohama I / ATCC BAA-589 / NCTC 13251</strain>
    </source>
</reference>
<evidence type="ECO:0000255" key="1">
    <source>
        <dbReference type="HAMAP-Rule" id="MF_00203"/>
    </source>
</evidence>
<feature type="chain" id="PRO_0000227404" description="UvrABC system protein C">
    <location>
        <begin position="1"/>
        <end position="609"/>
    </location>
</feature>
<feature type="domain" description="GIY-YIG" evidence="1">
    <location>
        <begin position="16"/>
        <end position="94"/>
    </location>
</feature>
<feature type="domain" description="UVR" evidence="1">
    <location>
        <begin position="203"/>
        <end position="238"/>
    </location>
</feature>
<dbReference type="EMBL" id="BX640417">
    <property type="protein sequence ID" value="CAE42359.1"/>
    <property type="molecule type" value="Genomic_DNA"/>
</dbReference>
<dbReference type="RefSeq" id="NP_880743.1">
    <property type="nucleotide sequence ID" value="NC_002929.2"/>
</dbReference>
<dbReference type="RefSeq" id="WP_010930726.1">
    <property type="nucleotide sequence ID" value="NZ_CP039022.1"/>
</dbReference>
<dbReference type="SMR" id="Q7VWV7"/>
<dbReference type="STRING" id="257313.BP2081"/>
<dbReference type="PaxDb" id="257313-BP2081"/>
<dbReference type="GeneID" id="69601850"/>
<dbReference type="KEGG" id="bpe:BP2081"/>
<dbReference type="PATRIC" id="fig|257313.5.peg.2237"/>
<dbReference type="eggNOG" id="COG0322">
    <property type="taxonomic scope" value="Bacteria"/>
</dbReference>
<dbReference type="HOGENOM" id="CLU_014841_3_0_4"/>
<dbReference type="Proteomes" id="UP000002676">
    <property type="component" value="Chromosome"/>
</dbReference>
<dbReference type="GO" id="GO:0005737">
    <property type="term" value="C:cytoplasm"/>
    <property type="evidence" value="ECO:0007669"/>
    <property type="project" value="UniProtKB-SubCell"/>
</dbReference>
<dbReference type="GO" id="GO:0009380">
    <property type="term" value="C:excinuclease repair complex"/>
    <property type="evidence" value="ECO:0007669"/>
    <property type="project" value="InterPro"/>
</dbReference>
<dbReference type="GO" id="GO:0003677">
    <property type="term" value="F:DNA binding"/>
    <property type="evidence" value="ECO:0007669"/>
    <property type="project" value="UniProtKB-UniRule"/>
</dbReference>
<dbReference type="GO" id="GO:0009381">
    <property type="term" value="F:excinuclease ABC activity"/>
    <property type="evidence" value="ECO:0007669"/>
    <property type="project" value="UniProtKB-UniRule"/>
</dbReference>
<dbReference type="GO" id="GO:0006289">
    <property type="term" value="P:nucleotide-excision repair"/>
    <property type="evidence" value="ECO:0007669"/>
    <property type="project" value="UniProtKB-UniRule"/>
</dbReference>
<dbReference type="GO" id="GO:0009432">
    <property type="term" value="P:SOS response"/>
    <property type="evidence" value="ECO:0007669"/>
    <property type="project" value="UniProtKB-UniRule"/>
</dbReference>
<dbReference type="CDD" id="cd10434">
    <property type="entry name" value="GIY-YIG_UvrC_Cho"/>
    <property type="match status" value="1"/>
</dbReference>
<dbReference type="FunFam" id="3.30.420.340:FF:000001">
    <property type="entry name" value="UvrABC system protein C"/>
    <property type="match status" value="1"/>
</dbReference>
<dbReference type="FunFam" id="3.40.1440.10:FF:000001">
    <property type="entry name" value="UvrABC system protein C"/>
    <property type="match status" value="1"/>
</dbReference>
<dbReference type="Gene3D" id="1.10.150.20">
    <property type="entry name" value="5' to 3' exonuclease, C-terminal subdomain"/>
    <property type="match status" value="1"/>
</dbReference>
<dbReference type="Gene3D" id="3.40.1440.10">
    <property type="entry name" value="GIY-YIG endonuclease"/>
    <property type="match status" value="1"/>
</dbReference>
<dbReference type="Gene3D" id="4.10.860.10">
    <property type="entry name" value="UVR domain"/>
    <property type="match status" value="1"/>
</dbReference>
<dbReference type="Gene3D" id="3.30.420.340">
    <property type="entry name" value="UvrC, RNAse H endonuclease domain"/>
    <property type="match status" value="1"/>
</dbReference>
<dbReference type="HAMAP" id="MF_00203">
    <property type="entry name" value="UvrC"/>
    <property type="match status" value="1"/>
</dbReference>
<dbReference type="InterPro" id="IPR000305">
    <property type="entry name" value="GIY-YIG_endonuc"/>
</dbReference>
<dbReference type="InterPro" id="IPR035901">
    <property type="entry name" value="GIY-YIG_endonuc_sf"/>
</dbReference>
<dbReference type="InterPro" id="IPR047296">
    <property type="entry name" value="GIY-YIG_UvrC_Cho"/>
</dbReference>
<dbReference type="InterPro" id="IPR003583">
    <property type="entry name" value="Hlx-hairpin-Hlx_DNA-bd_motif"/>
</dbReference>
<dbReference type="InterPro" id="IPR010994">
    <property type="entry name" value="RuvA_2-like"/>
</dbReference>
<dbReference type="InterPro" id="IPR001943">
    <property type="entry name" value="UVR_dom"/>
</dbReference>
<dbReference type="InterPro" id="IPR036876">
    <property type="entry name" value="UVR_dom_sf"/>
</dbReference>
<dbReference type="InterPro" id="IPR050066">
    <property type="entry name" value="UvrABC_protein_C"/>
</dbReference>
<dbReference type="InterPro" id="IPR004791">
    <property type="entry name" value="UvrC"/>
</dbReference>
<dbReference type="InterPro" id="IPR001162">
    <property type="entry name" value="UvrC_RNase_H_dom"/>
</dbReference>
<dbReference type="InterPro" id="IPR038476">
    <property type="entry name" value="UvrC_RNase_H_dom_sf"/>
</dbReference>
<dbReference type="NCBIfam" id="NF001824">
    <property type="entry name" value="PRK00558.1-5"/>
    <property type="match status" value="1"/>
</dbReference>
<dbReference type="NCBIfam" id="TIGR00194">
    <property type="entry name" value="uvrC"/>
    <property type="match status" value="1"/>
</dbReference>
<dbReference type="PANTHER" id="PTHR30562:SF1">
    <property type="entry name" value="UVRABC SYSTEM PROTEIN C"/>
    <property type="match status" value="1"/>
</dbReference>
<dbReference type="PANTHER" id="PTHR30562">
    <property type="entry name" value="UVRC/OXIDOREDUCTASE"/>
    <property type="match status" value="1"/>
</dbReference>
<dbReference type="Pfam" id="PF01541">
    <property type="entry name" value="GIY-YIG"/>
    <property type="match status" value="1"/>
</dbReference>
<dbReference type="Pfam" id="PF14520">
    <property type="entry name" value="HHH_5"/>
    <property type="match status" value="1"/>
</dbReference>
<dbReference type="Pfam" id="PF02151">
    <property type="entry name" value="UVR"/>
    <property type="match status" value="1"/>
</dbReference>
<dbReference type="Pfam" id="PF22920">
    <property type="entry name" value="UvrC_RNaseH"/>
    <property type="match status" value="1"/>
</dbReference>
<dbReference type="Pfam" id="PF08459">
    <property type="entry name" value="UvrC_RNaseH_dom"/>
    <property type="match status" value="1"/>
</dbReference>
<dbReference type="SMART" id="SM00465">
    <property type="entry name" value="GIYc"/>
    <property type="match status" value="1"/>
</dbReference>
<dbReference type="SMART" id="SM00278">
    <property type="entry name" value="HhH1"/>
    <property type="match status" value="2"/>
</dbReference>
<dbReference type="SUPFAM" id="SSF46600">
    <property type="entry name" value="C-terminal UvrC-binding domain of UvrB"/>
    <property type="match status" value="1"/>
</dbReference>
<dbReference type="SUPFAM" id="SSF82771">
    <property type="entry name" value="GIY-YIG endonuclease"/>
    <property type="match status" value="1"/>
</dbReference>
<dbReference type="SUPFAM" id="SSF47781">
    <property type="entry name" value="RuvA domain 2-like"/>
    <property type="match status" value="1"/>
</dbReference>
<dbReference type="PROSITE" id="PS50164">
    <property type="entry name" value="GIY_YIG"/>
    <property type="match status" value="1"/>
</dbReference>
<dbReference type="PROSITE" id="PS50151">
    <property type="entry name" value="UVR"/>
    <property type="match status" value="1"/>
</dbReference>
<dbReference type="PROSITE" id="PS50165">
    <property type="entry name" value="UVRC"/>
    <property type="match status" value="1"/>
</dbReference>
<keyword id="KW-0963">Cytoplasm</keyword>
<keyword id="KW-0227">DNA damage</keyword>
<keyword id="KW-0228">DNA excision</keyword>
<keyword id="KW-0234">DNA repair</keyword>
<keyword id="KW-0267">Excision nuclease</keyword>
<keyword id="KW-1185">Reference proteome</keyword>
<keyword id="KW-0742">SOS response</keyword>
<protein>
    <recommendedName>
        <fullName evidence="1">UvrABC system protein C</fullName>
        <shortName evidence="1">Protein UvrC</shortName>
    </recommendedName>
    <alternativeName>
        <fullName evidence="1">Excinuclease ABC subunit C</fullName>
    </alternativeName>
</protein>
<proteinExistence type="inferred from homology"/>
<organism>
    <name type="scientific">Bordetella pertussis (strain Tohama I / ATCC BAA-589 / NCTC 13251)</name>
    <dbReference type="NCBI Taxonomy" id="257313"/>
    <lineage>
        <taxon>Bacteria</taxon>
        <taxon>Pseudomonadati</taxon>
        <taxon>Pseudomonadota</taxon>
        <taxon>Betaproteobacteria</taxon>
        <taxon>Burkholderiales</taxon>
        <taxon>Alcaligenaceae</taxon>
        <taxon>Bordetella</taxon>
    </lineage>
</organism>
<gene>
    <name evidence="1" type="primary">uvrC</name>
    <name type="ordered locus">BP2081</name>
</gene>
<sequence>MPDDFNLKSFLADLPHLPGVYRHLDAAGEAMYVGKARDLKKRVSSYFQKNLASPRIAQMVAKVASVDVTVTRSEAEALLLENNLIKSLRPRYNILFRDDKSYPYLLITGHAWPRIAYYRGATSKRGQYFGPYPNSWAVRETIQILQKVFRLRTCEDTVFANRSRPCLLHQIGRCSAPCVGVIEAEDYAHDVQRAVRFLNGEAREVMDEIEARMLQASTELRFEEAAVLRDQMGSLSKVLHQQTMENVGGDDTDVIAVASAGGKICVNLAMVRGGRHLGDKPFFPTHAEGEQPAQVLEAFVAQHYADGAMPPVLVCSHALPDSGLVGLLAEQGGTRVARVLTRPQGVRRSWLEQAQKNAEMALARALTESGARAGRTLALAEALDLDTDEESLDALRIECFDISHTAGEATQASCVVFLHHDMQPSLYRRYNIVGITPGDDYAAMRQVLTRRFGKVTDGEAPMPGLVLIDGGKGQVEVARQVFVELGLDIQSLVGVAKGEGRKVGLETLVFADGRPPVALGKESAALMLIAQVRDEAHRFAITGMRARRAKTRNVSRLEEIEGIGARRRQRLLARFGGLSGVSSASIEDLASVEGISQELAVRIYDALHG</sequence>
<accession>Q7VWV7</accession>
<comment type="function">
    <text evidence="1">The UvrABC repair system catalyzes the recognition and processing of DNA lesions. UvrC both incises the 5' and 3' sides of the lesion. The N-terminal half is responsible for the 3' incision and the C-terminal half is responsible for the 5' incision.</text>
</comment>
<comment type="subunit">
    <text evidence="1">Interacts with UvrB in an incision complex.</text>
</comment>
<comment type="subcellular location">
    <subcellularLocation>
        <location evidence="1">Cytoplasm</location>
    </subcellularLocation>
</comment>
<comment type="similarity">
    <text evidence="1">Belongs to the UvrC family.</text>
</comment>
<name>UVRC_BORPE</name>